<comment type="function">
    <text evidence="1">Regulates expression of genes involved in acid-resistance and biofilm formation. May be a non-specific DNA-binding protein that binds genes and/or intergenic regions via a geometric recognition (By similarity).</text>
</comment>
<comment type="subunit">
    <text evidence="1">Homodimer.</text>
</comment>
<comment type="similarity">
    <text evidence="2">Belongs to the AriR family.</text>
</comment>
<evidence type="ECO:0000250" key="1"/>
<evidence type="ECO:0000305" key="2"/>
<keyword id="KW-0238">DNA-binding</keyword>
<feature type="chain" id="PRO_0000350557" description="Regulatory protein AriR">
    <location>
        <begin position="1"/>
        <end position="88"/>
    </location>
</feature>
<reference key="1">
    <citation type="journal article" date="2008" name="J. Bacteriol.">
        <title>Insights into the environmental resistance gene pool from the genome sequence of the multidrug-resistant environmental isolate Escherichia coli SMS-3-5.</title>
        <authorList>
            <person name="Fricke W.F."/>
            <person name="Wright M.S."/>
            <person name="Lindell A.H."/>
            <person name="Harkins D.M."/>
            <person name="Baker-Austin C."/>
            <person name="Ravel J."/>
            <person name="Stepanauskas R."/>
        </authorList>
    </citation>
    <scope>NUCLEOTIDE SEQUENCE [LARGE SCALE GENOMIC DNA]</scope>
    <source>
        <strain>SMS-3-5 / SECEC</strain>
    </source>
</reference>
<protein>
    <recommendedName>
        <fullName>Regulatory protein AriR</fullName>
    </recommendedName>
</protein>
<sequence length="88" mass="9737">MLEDTTIHNAITDKALSSYFRSSGNLLEEESAVLGQAVTNLMLSGDNVNNKNIILSLIHSLETTNDILKADVIRKTLEIVLRYTADDM</sequence>
<gene>
    <name type="primary">ariR</name>
    <name type="ordered locus">EcSMS35_1985</name>
</gene>
<accession>B1LI03</accession>
<dbReference type="EMBL" id="CP000970">
    <property type="protein sequence ID" value="ACB19866.1"/>
    <property type="molecule type" value="Genomic_DNA"/>
</dbReference>
<dbReference type="RefSeq" id="WP_000888777.1">
    <property type="nucleotide sequence ID" value="NC_010498.1"/>
</dbReference>
<dbReference type="SMR" id="B1LI03"/>
<dbReference type="KEGG" id="ecm:EcSMS35_1985"/>
<dbReference type="HOGENOM" id="CLU_164045_1_0_6"/>
<dbReference type="Proteomes" id="UP000007011">
    <property type="component" value="Chromosome"/>
</dbReference>
<dbReference type="GO" id="GO:0003677">
    <property type="term" value="F:DNA binding"/>
    <property type="evidence" value="ECO:0007669"/>
    <property type="project" value="UniProtKB-KW"/>
</dbReference>
<dbReference type="GO" id="GO:0071468">
    <property type="term" value="P:cellular response to acidic pH"/>
    <property type="evidence" value="ECO:0007669"/>
    <property type="project" value="InterPro"/>
</dbReference>
<dbReference type="Gene3D" id="1.20.5.5260">
    <property type="match status" value="1"/>
</dbReference>
<dbReference type="InterPro" id="IPR024753">
    <property type="entry name" value="AriR"/>
</dbReference>
<dbReference type="Pfam" id="PF10798">
    <property type="entry name" value="YmgB"/>
    <property type="match status" value="1"/>
</dbReference>
<organism>
    <name type="scientific">Escherichia coli (strain SMS-3-5 / SECEC)</name>
    <dbReference type="NCBI Taxonomy" id="439855"/>
    <lineage>
        <taxon>Bacteria</taxon>
        <taxon>Pseudomonadati</taxon>
        <taxon>Pseudomonadota</taxon>
        <taxon>Gammaproteobacteria</taxon>
        <taxon>Enterobacterales</taxon>
        <taxon>Enterobacteriaceae</taxon>
        <taxon>Escherichia</taxon>
    </lineage>
</organism>
<name>ARIR_ECOSM</name>
<proteinExistence type="inferred from homology"/>